<comment type="function">
    <text evidence="1 2">Secreted ribonuclease that can either promote or restrict cell proliferation of target cells, depending on the context. Endocytosed in target cells via its receptor PLXNB2 and translocates to the cytoplasm or nucleus. Under stress conditions, localizes to the cytoplasm and promotes the assembly of stress granules (SGs): specifically cleaves a subset of tRNAs within anticodon loops to produce tRNA-derived stress-induced fragments (tiRNAs), resulting in translation repression and inhibition of cell proliferation (By similarity). tiRNas also prevent formation of apoptosome, thereby promoting cell survival (By similarity). Preferentially cleaves RNAs between a pyrimidine and an adenosine residue, suggesting that it cleaves the anticodon loop of tRNA(Ala) (32-UUAGCAU-38) after positions 33 and 36. Cleaves a subset of tRNAs, including tRNA(Ala), tRNA(Glu), tRNA(Gly), tRNA(Lys), tRNA(Val), tRNA(His), tRNA(Asp) and tRNA(Sec). Under growth conditions and in differentiated cells, translocates to the nucleus and stimulates ribosomal RNA (rRNA) transcription, including that containing the initiation site sequences of 45S rRNA, thereby promoting cell growth and proliferation. Angiogenin induces vascularization of normal and malignant tissues via its ability to promote rRNA transcription. Involved in hematopoietic stem and progenitor cell (HSPC) growth and survival by promoting rRNA transcription in growth conditions and inhibiting translation in response to stress, respectively. Mediates the crosstalk between myeloid and intestinal epithelial cells to protect the intestinal epithelial barrier integrity: secreted by myeloid cells and promotes intestinal epithelial cells proliferation and survival (By similarity). Also mediates osteoclast-endothelial cell crosstalk in growing bone: produced by osteoclasts and protects the neighboring vascular cells against senescence by promoting rRNA transcription (By similarity).</text>
</comment>
<comment type="activity regulation">
    <text evidence="1">Has weak tRNA ribonuclease activity by itself due to partial autoinhibition by its C-terminus, which folds into a short alpha-helix that partially occludes the substrate-binding site. In absence of stress, the ribonuclease activity is inhibited by RNH1 in the cytoplasm. In response to stress, dissociates from RNH1 in the cytoplasm and associates with cytoplasmic ribosomes with vacant A-sites: ribosomes directly activate the tRNA ribonuclease activity of ANG by refolding the C-terminal alpha-helix. In response to stress, the angiogenic activity of ANG is inhibited by RNH1 in the nucleus.</text>
</comment>
<comment type="subunit">
    <text evidence="1">Homodimer. Interacts with RNH1; inhibiting ANG ribonuclease activity. Interacts with PCNA.</text>
</comment>
<comment type="subcellular location">
    <subcellularLocation>
        <location evidence="1">Secreted</location>
    </subcellularLocation>
    <subcellularLocation>
        <location evidence="1">Nucleus</location>
    </subcellularLocation>
    <subcellularLocation>
        <location evidence="1">Nucleus</location>
        <location evidence="1">Nucleolus</location>
    </subcellularLocation>
    <subcellularLocation>
        <location evidence="1">Cytoplasm</location>
        <location evidence="1">Stress granule</location>
    </subcellularLocation>
    <text evidence="1">The secreted protein is rapidly endocytosed by target cells following interaction with PLXNB2 receptor and translocated to the cytoplasm and nucleus. In the nucleus, accumulates in the nucleolus and binds to DNA.</text>
</comment>
<comment type="similarity">
    <text evidence="3">Belongs to the pancreatic ribonuclease family.</text>
</comment>
<evidence type="ECO:0000250" key="1">
    <source>
        <dbReference type="UniProtKB" id="P03950"/>
    </source>
</evidence>
<evidence type="ECO:0000250" key="2">
    <source>
        <dbReference type="UniProtKB" id="P21570"/>
    </source>
</evidence>
<evidence type="ECO:0000305" key="3"/>
<dbReference type="EC" id="3.1.27.-" evidence="1"/>
<dbReference type="EMBL" id="AY221129">
    <property type="protein sequence ID" value="AAO41336.1"/>
    <property type="molecule type" value="Genomic_DNA"/>
</dbReference>
<dbReference type="SMR" id="Q861Y4"/>
<dbReference type="GO" id="GO:0032311">
    <property type="term" value="C:angiogenin-PRI complex"/>
    <property type="evidence" value="ECO:0000250"/>
    <property type="project" value="UniProtKB"/>
</dbReference>
<dbReference type="GO" id="GO:0005604">
    <property type="term" value="C:basement membrane"/>
    <property type="evidence" value="ECO:0000250"/>
    <property type="project" value="UniProtKB"/>
</dbReference>
<dbReference type="GO" id="GO:0005737">
    <property type="term" value="C:cytoplasm"/>
    <property type="evidence" value="ECO:0000250"/>
    <property type="project" value="UniProtKB"/>
</dbReference>
<dbReference type="GO" id="GO:0010494">
    <property type="term" value="C:cytoplasmic stress granule"/>
    <property type="evidence" value="ECO:0007669"/>
    <property type="project" value="UniProtKB-SubCell"/>
</dbReference>
<dbReference type="GO" id="GO:0030139">
    <property type="term" value="C:endocytic vesicle"/>
    <property type="evidence" value="ECO:0000250"/>
    <property type="project" value="UniProtKB"/>
</dbReference>
<dbReference type="GO" id="GO:0005615">
    <property type="term" value="C:extracellular space"/>
    <property type="evidence" value="ECO:0000250"/>
    <property type="project" value="UniProtKB"/>
</dbReference>
<dbReference type="GO" id="GO:0005730">
    <property type="term" value="C:nucleolus"/>
    <property type="evidence" value="ECO:0000250"/>
    <property type="project" value="UniProtKB"/>
</dbReference>
<dbReference type="GO" id="GO:0005634">
    <property type="term" value="C:nucleus"/>
    <property type="evidence" value="ECO:0000250"/>
    <property type="project" value="UniProtKB"/>
</dbReference>
<dbReference type="GO" id="GO:0003779">
    <property type="term" value="F:actin binding"/>
    <property type="evidence" value="ECO:0000250"/>
    <property type="project" value="UniProtKB"/>
</dbReference>
<dbReference type="GO" id="GO:0005507">
    <property type="term" value="F:copper ion binding"/>
    <property type="evidence" value="ECO:0000250"/>
    <property type="project" value="UniProtKB"/>
</dbReference>
<dbReference type="GO" id="GO:0003677">
    <property type="term" value="F:DNA binding"/>
    <property type="evidence" value="ECO:0007669"/>
    <property type="project" value="UniProtKB-KW"/>
</dbReference>
<dbReference type="GO" id="GO:0004519">
    <property type="term" value="F:endonuclease activity"/>
    <property type="evidence" value="ECO:0007669"/>
    <property type="project" value="UniProtKB-KW"/>
</dbReference>
<dbReference type="GO" id="GO:0008201">
    <property type="term" value="F:heparin binding"/>
    <property type="evidence" value="ECO:0000250"/>
    <property type="project" value="UniProtKB"/>
</dbReference>
<dbReference type="GO" id="GO:0042803">
    <property type="term" value="F:protein homodimerization activity"/>
    <property type="evidence" value="ECO:0000250"/>
    <property type="project" value="UniProtKB"/>
</dbReference>
<dbReference type="GO" id="GO:0004540">
    <property type="term" value="F:RNA nuclease activity"/>
    <property type="evidence" value="ECO:0000250"/>
    <property type="project" value="UniProtKB"/>
</dbReference>
<dbReference type="GO" id="GO:0005102">
    <property type="term" value="F:signaling receptor binding"/>
    <property type="evidence" value="ECO:0000250"/>
    <property type="project" value="UniProtKB"/>
</dbReference>
<dbReference type="GO" id="GO:0004549">
    <property type="term" value="F:tRNA-specific ribonuclease activity"/>
    <property type="evidence" value="ECO:0000250"/>
    <property type="project" value="UniProtKB"/>
</dbReference>
<dbReference type="GO" id="GO:0030041">
    <property type="term" value="P:actin filament polymerization"/>
    <property type="evidence" value="ECO:0000250"/>
    <property type="project" value="UniProtKB"/>
</dbReference>
<dbReference type="GO" id="GO:0001525">
    <property type="term" value="P:angiogenesis"/>
    <property type="evidence" value="ECO:0000250"/>
    <property type="project" value="UniProtKB"/>
</dbReference>
<dbReference type="GO" id="GO:0019731">
    <property type="term" value="P:antibacterial humoral response"/>
    <property type="evidence" value="ECO:0007669"/>
    <property type="project" value="TreeGrafter"/>
</dbReference>
<dbReference type="GO" id="GO:0061844">
    <property type="term" value="P:antimicrobial humoral immune response mediated by antimicrobial peptide"/>
    <property type="evidence" value="ECO:0007669"/>
    <property type="project" value="TreeGrafter"/>
</dbReference>
<dbReference type="GO" id="GO:0050830">
    <property type="term" value="P:defense response to Gram-positive bacterium"/>
    <property type="evidence" value="ECO:0007669"/>
    <property type="project" value="TreeGrafter"/>
</dbReference>
<dbReference type="GO" id="GO:0071425">
    <property type="term" value="P:hematopoietic stem cell proliferation"/>
    <property type="evidence" value="ECO:0000250"/>
    <property type="project" value="UniProtKB"/>
</dbReference>
<dbReference type="GO" id="GO:0045087">
    <property type="term" value="P:innate immune response"/>
    <property type="evidence" value="ECO:0007669"/>
    <property type="project" value="TreeGrafter"/>
</dbReference>
<dbReference type="GO" id="GO:0043066">
    <property type="term" value="P:negative regulation of apoptotic process"/>
    <property type="evidence" value="ECO:0000250"/>
    <property type="project" value="UniProtKB"/>
</dbReference>
<dbReference type="GO" id="GO:0048662">
    <property type="term" value="P:negative regulation of smooth muscle cell proliferation"/>
    <property type="evidence" value="ECO:0000250"/>
    <property type="project" value="UniProtKB"/>
</dbReference>
<dbReference type="GO" id="GO:0032055">
    <property type="term" value="P:negative regulation of translation in response to stress"/>
    <property type="evidence" value="ECO:0000250"/>
    <property type="project" value="UniProtKB"/>
</dbReference>
<dbReference type="GO" id="GO:0001938">
    <property type="term" value="P:positive regulation of endothelial cell proliferation"/>
    <property type="evidence" value="ECO:0000250"/>
    <property type="project" value="UniProtKB"/>
</dbReference>
<dbReference type="GO" id="GO:0050714">
    <property type="term" value="P:positive regulation of protein secretion"/>
    <property type="evidence" value="ECO:0000250"/>
    <property type="project" value="UniProtKB"/>
</dbReference>
<dbReference type="GO" id="GO:0001666">
    <property type="term" value="P:response to hypoxia"/>
    <property type="evidence" value="ECO:0000250"/>
    <property type="project" value="UniProtKB"/>
</dbReference>
<dbReference type="GO" id="GO:0009303">
    <property type="term" value="P:rRNA transcription"/>
    <property type="evidence" value="ECO:0000250"/>
    <property type="project" value="UniProtKB"/>
</dbReference>
<dbReference type="GO" id="GO:0023052">
    <property type="term" value="P:signaling"/>
    <property type="evidence" value="ECO:0000250"/>
    <property type="project" value="UniProtKB"/>
</dbReference>
<dbReference type="GO" id="GO:0034063">
    <property type="term" value="P:stress granule assembly"/>
    <property type="evidence" value="ECO:0000250"/>
    <property type="project" value="UniProtKB"/>
</dbReference>
<dbReference type="CDD" id="cd06265">
    <property type="entry name" value="RNase_A_canonical"/>
    <property type="match status" value="1"/>
</dbReference>
<dbReference type="FunFam" id="3.10.130.10:FF:000001">
    <property type="entry name" value="Ribonuclease pancreatic"/>
    <property type="match status" value="1"/>
</dbReference>
<dbReference type="Gene3D" id="3.10.130.10">
    <property type="entry name" value="Ribonuclease A-like domain"/>
    <property type="match status" value="1"/>
</dbReference>
<dbReference type="InterPro" id="IPR001427">
    <property type="entry name" value="RNaseA"/>
</dbReference>
<dbReference type="InterPro" id="IPR036816">
    <property type="entry name" value="RNaseA-like_dom_sf"/>
</dbReference>
<dbReference type="InterPro" id="IPR023411">
    <property type="entry name" value="RNaseA_AS"/>
</dbReference>
<dbReference type="InterPro" id="IPR023412">
    <property type="entry name" value="RNaseA_domain"/>
</dbReference>
<dbReference type="PANTHER" id="PTHR11437:SF60">
    <property type="entry name" value="ANGIOGENIN"/>
    <property type="match status" value="1"/>
</dbReference>
<dbReference type="PANTHER" id="PTHR11437">
    <property type="entry name" value="RIBONUCLEASE"/>
    <property type="match status" value="1"/>
</dbReference>
<dbReference type="Pfam" id="PF00074">
    <property type="entry name" value="RnaseA"/>
    <property type="match status" value="1"/>
</dbReference>
<dbReference type="PRINTS" id="PR00794">
    <property type="entry name" value="RIBONUCLEASE"/>
</dbReference>
<dbReference type="SMART" id="SM00092">
    <property type="entry name" value="RNAse_Pc"/>
    <property type="match status" value="1"/>
</dbReference>
<dbReference type="SUPFAM" id="SSF54076">
    <property type="entry name" value="RNase A-like"/>
    <property type="match status" value="1"/>
</dbReference>
<dbReference type="PROSITE" id="PS00127">
    <property type="entry name" value="RNASE_PANCREATIC"/>
    <property type="match status" value="1"/>
</dbReference>
<proteinExistence type="inferred from homology"/>
<name>ANGI_TRAFR</name>
<gene>
    <name type="primary">ANG</name>
    <name type="synonym">RNASE5</name>
</gene>
<reference key="1">
    <citation type="journal article" date="2003" name="Gene">
        <title>Pseudogenization of the tumor-growth promoter angiogenin in a leaf-eating monkey.</title>
        <authorList>
            <person name="Zhang J."/>
            <person name="Zhang Y.-P."/>
        </authorList>
    </citation>
    <scope>NUCLEOTIDE SEQUENCE [GENOMIC DNA]</scope>
</reference>
<accession>Q861Y4</accession>
<keyword id="KW-0037">Angiogenesis</keyword>
<keyword id="KW-0963">Cytoplasm</keyword>
<keyword id="KW-0217">Developmental protein</keyword>
<keyword id="KW-0221">Differentiation</keyword>
<keyword id="KW-1015">Disulfide bond</keyword>
<keyword id="KW-0238">DNA-binding</keyword>
<keyword id="KW-0255">Endonuclease</keyword>
<keyword id="KW-0378">Hydrolase</keyword>
<keyword id="KW-0540">Nuclease</keyword>
<keyword id="KW-0539">Nucleus</keyword>
<keyword id="KW-0652">Protein synthesis inhibitor</keyword>
<keyword id="KW-0873">Pyrrolidone carboxylic acid</keyword>
<keyword id="KW-0964">Secreted</keyword>
<keyword id="KW-0732">Signal</keyword>
<keyword id="KW-0346">Stress response</keyword>
<feature type="signal peptide" evidence="1">
    <location>
        <begin position="1"/>
        <end position="24"/>
    </location>
</feature>
<feature type="chain" id="PRO_0000030854" description="Angiogenin">
    <location>
        <begin position="25"/>
        <end position="146"/>
    </location>
</feature>
<feature type="short sequence motif" description="Nucleolar localization signal" evidence="1">
    <location>
        <begin position="55"/>
        <end position="59"/>
    </location>
</feature>
<feature type="active site" description="Proton acceptor" evidence="1">
    <location>
        <position position="37"/>
    </location>
</feature>
<feature type="active site" description="Proton donor" evidence="1">
    <location>
        <position position="138"/>
    </location>
</feature>
<feature type="binding site" evidence="1">
    <location>
        <position position="45"/>
    </location>
    <ligand>
        <name>tRNA</name>
        <dbReference type="ChEBI" id="CHEBI:17843"/>
    </ligand>
</feature>
<feature type="binding site" evidence="1">
    <location>
        <position position="105"/>
    </location>
    <ligand>
        <name>tRNA</name>
        <dbReference type="ChEBI" id="CHEBI:17843"/>
    </ligand>
</feature>
<feature type="binding site" evidence="1">
    <location>
        <position position="127"/>
    </location>
    <ligand>
        <name>tRNA</name>
        <dbReference type="ChEBI" id="CHEBI:17843"/>
    </ligand>
</feature>
<feature type="modified residue" description="Pyrrolidone carboxylic acid" evidence="1">
    <location>
        <position position="25"/>
    </location>
</feature>
<feature type="disulfide bond" evidence="1">
    <location>
        <begin position="50"/>
        <end position="105"/>
    </location>
</feature>
<feature type="disulfide bond" evidence="1">
    <location>
        <begin position="63"/>
        <end position="116"/>
    </location>
</feature>
<feature type="disulfide bond" evidence="1">
    <location>
        <begin position="81"/>
        <end position="131"/>
    </location>
</feature>
<protein>
    <recommendedName>
        <fullName>Angiogenin</fullName>
        <ecNumber evidence="1">3.1.27.-</ecNumber>
    </recommendedName>
    <alternativeName>
        <fullName>Ribonuclease 5</fullName>
        <shortName>RNase 5</shortName>
    </alternativeName>
</protein>
<sequence length="146" mass="16558">MVMGLGLFLLVFMLGLGLTPPTLAQDNSRYRDFLTKHYDATPQGRNDRYCESMMRRRGLTSPCKDINTFIHGNSRHIKAICGDENGNPYRENLRISKSPFQVTTCNLRGGSPWPPCRYRATAGFRNIVVACENDLPVHLDQSIFHP</sequence>
<organism>
    <name type="scientific">Trachypithecus francoisi</name>
    <name type="common">Francois' leaf monkey</name>
    <name type="synonym">Presbytis francoisi</name>
    <dbReference type="NCBI Taxonomy" id="54180"/>
    <lineage>
        <taxon>Eukaryota</taxon>
        <taxon>Metazoa</taxon>
        <taxon>Chordata</taxon>
        <taxon>Craniata</taxon>
        <taxon>Vertebrata</taxon>
        <taxon>Euteleostomi</taxon>
        <taxon>Mammalia</taxon>
        <taxon>Eutheria</taxon>
        <taxon>Euarchontoglires</taxon>
        <taxon>Primates</taxon>
        <taxon>Haplorrhini</taxon>
        <taxon>Catarrhini</taxon>
        <taxon>Cercopithecidae</taxon>
        <taxon>Colobinae</taxon>
        <taxon>Trachypithecus</taxon>
    </lineage>
</organism>